<dbReference type="EMBL" id="CP001110">
    <property type="protein sequence ID" value="ACF42639.1"/>
    <property type="molecule type" value="Genomic_DNA"/>
</dbReference>
<dbReference type="RefSeq" id="WP_012507135.1">
    <property type="nucleotide sequence ID" value="NC_011060.1"/>
</dbReference>
<dbReference type="SMR" id="B4SBW4"/>
<dbReference type="STRING" id="324925.Ppha_0306"/>
<dbReference type="KEGG" id="pph:Ppha_0306"/>
<dbReference type="eggNOG" id="COG0098">
    <property type="taxonomic scope" value="Bacteria"/>
</dbReference>
<dbReference type="HOGENOM" id="CLU_065898_2_2_10"/>
<dbReference type="OrthoDB" id="9809045at2"/>
<dbReference type="Proteomes" id="UP000002724">
    <property type="component" value="Chromosome"/>
</dbReference>
<dbReference type="GO" id="GO:0015935">
    <property type="term" value="C:small ribosomal subunit"/>
    <property type="evidence" value="ECO:0007669"/>
    <property type="project" value="InterPro"/>
</dbReference>
<dbReference type="GO" id="GO:0019843">
    <property type="term" value="F:rRNA binding"/>
    <property type="evidence" value="ECO:0007669"/>
    <property type="project" value="UniProtKB-UniRule"/>
</dbReference>
<dbReference type="GO" id="GO:0003735">
    <property type="term" value="F:structural constituent of ribosome"/>
    <property type="evidence" value="ECO:0007669"/>
    <property type="project" value="InterPro"/>
</dbReference>
<dbReference type="GO" id="GO:0006412">
    <property type="term" value="P:translation"/>
    <property type="evidence" value="ECO:0007669"/>
    <property type="project" value="UniProtKB-UniRule"/>
</dbReference>
<dbReference type="FunFam" id="3.30.160.20:FF:000001">
    <property type="entry name" value="30S ribosomal protein S5"/>
    <property type="match status" value="1"/>
</dbReference>
<dbReference type="FunFam" id="3.30.230.10:FF:000002">
    <property type="entry name" value="30S ribosomal protein S5"/>
    <property type="match status" value="1"/>
</dbReference>
<dbReference type="Gene3D" id="3.30.160.20">
    <property type="match status" value="1"/>
</dbReference>
<dbReference type="Gene3D" id="3.30.230.10">
    <property type="match status" value="1"/>
</dbReference>
<dbReference type="HAMAP" id="MF_01307_B">
    <property type="entry name" value="Ribosomal_uS5_B"/>
    <property type="match status" value="1"/>
</dbReference>
<dbReference type="InterPro" id="IPR020568">
    <property type="entry name" value="Ribosomal_Su5_D2-typ_SF"/>
</dbReference>
<dbReference type="InterPro" id="IPR000851">
    <property type="entry name" value="Ribosomal_uS5"/>
</dbReference>
<dbReference type="InterPro" id="IPR005712">
    <property type="entry name" value="Ribosomal_uS5_bac-type"/>
</dbReference>
<dbReference type="InterPro" id="IPR005324">
    <property type="entry name" value="Ribosomal_uS5_C"/>
</dbReference>
<dbReference type="InterPro" id="IPR013810">
    <property type="entry name" value="Ribosomal_uS5_N"/>
</dbReference>
<dbReference type="InterPro" id="IPR018192">
    <property type="entry name" value="Ribosomal_uS5_N_CS"/>
</dbReference>
<dbReference type="InterPro" id="IPR014721">
    <property type="entry name" value="Ribsml_uS5_D2-typ_fold_subgr"/>
</dbReference>
<dbReference type="NCBIfam" id="TIGR01021">
    <property type="entry name" value="rpsE_bact"/>
    <property type="match status" value="1"/>
</dbReference>
<dbReference type="PANTHER" id="PTHR48277">
    <property type="entry name" value="MITOCHONDRIAL RIBOSOMAL PROTEIN S5"/>
    <property type="match status" value="1"/>
</dbReference>
<dbReference type="PANTHER" id="PTHR48277:SF1">
    <property type="entry name" value="MITOCHONDRIAL RIBOSOMAL PROTEIN S5"/>
    <property type="match status" value="1"/>
</dbReference>
<dbReference type="Pfam" id="PF00333">
    <property type="entry name" value="Ribosomal_S5"/>
    <property type="match status" value="1"/>
</dbReference>
<dbReference type="Pfam" id="PF03719">
    <property type="entry name" value="Ribosomal_S5_C"/>
    <property type="match status" value="1"/>
</dbReference>
<dbReference type="SUPFAM" id="SSF54768">
    <property type="entry name" value="dsRNA-binding domain-like"/>
    <property type="match status" value="1"/>
</dbReference>
<dbReference type="SUPFAM" id="SSF54211">
    <property type="entry name" value="Ribosomal protein S5 domain 2-like"/>
    <property type="match status" value="1"/>
</dbReference>
<dbReference type="PROSITE" id="PS00585">
    <property type="entry name" value="RIBOSOMAL_S5"/>
    <property type="match status" value="1"/>
</dbReference>
<dbReference type="PROSITE" id="PS50881">
    <property type="entry name" value="S5_DSRBD"/>
    <property type="match status" value="1"/>
</dbReference>
<name>RS5_PELPB</name>
<comment type="function">
    <text evidence="1">With S4 and S12 plays an important role in translational accuracy.</text>
</comment>
<comment type="function">
    <text evidence="1">Located at the back of the 30S subunit body where it stabilizes the conformation of the head with respect to the body.</text>
</comment>
<comment type="subunit">
    <text evidence="1">Part of the 30S ribosomal subunit. Contacts proteins S4 and S8.</text>
</comment>
<comment type="domain">
    <text>The N-terminal domain interacts with the head of the 30S subunit; the C-terminal domain interacts with the body and contacts protein S4. The interaction surface between S4 and S5 is involved in control of translational fidelity.</text>
</comment>
<comment type="similarity">
    <text evidence="1">Belongs to the universal ribosomal protein uS5 family.</text>
</comment>
<accession>B4SBW4</accession>
<reference key="1">
    <citation type="submission" date="2008-06" db="EMBL/GenBank/DDBJ databases">
        <title>Complete sequence of Pelodictyon phaeoclathratiforme BU-1.</title>
        <authorList>
            <consortium name="US DOE Joint Genome Institute"/>
            <person name="Lucas S."/>
            <person name="Copeland A."/>
            <person name="Lapidus A."/>
            <person name="Glavina del Rio T."/>
            <person name="Dalin E."/>
            <person name="Tice H."/>
            <person name="Bruce D."/>
            <person name="Goodwin L."/>
            <person name="Pitluck S."/>
            <person name="Schmutz J."/>
            <person name="Larimer F."/>
            <person name="Land M."/>
            <person name="Hauser L."/>
            <person name="Kyrpides N."/>
            <person name="Mikhailova N."/>
            <person name="Liu Z."/>
            <person name="Li T."/>
            <person name="Zhao F."/>
            <person name="Overmann J."/>
            <person name="Bryant D.A."/>
            <person name="Richardson P."/>
        </authorList>
    </citation>
    <scope>NUCLEOTIDE SEQUENCE [LARGE SCALE GENOMIC DNA]</scope>
    <source>
        <strain>DSM 5477 / BU-1</strain>
    </source>
</reference>
<keyword id="KW-1185">Reference proteome</keyword>
<keyword id="KW-0687">Ribonucleoprotein</keyword>
<keyword id="KW-0689">Ribosomal protein</keyword>
<keyword id="KW-0694">RNA-binding</keyword>
<keyword id="KW-0699">rRNA-binding</keyword>
<proteinExistence type="inferred from homology"/>
<feature type="chain" id="PRO_1000140877" description="Small ribosomal subunit protein uS5">
    <location>
        <begin position="1"/>
        <end position="172"/>
    </location>
</feature>
<feature type="domain" description="S5 DRBM" evidence="1">
    <location>
        <begin position="16"/>
        <end position="79"/>
    </location>
</feature>
<gene>
    <name evidence="1" type="primary">rpsE</name>
    <name type="ordered locus">Ppha_0306</name>
</gene>
<evidence type="ECO:0000255" key="1">
    <source>
        <dbReference type="HAMAP-Rule" id="MF_01307"/>
    </source>
</evidence>
<evidence type="ECO:0000305" key="2"/>
<sequence length="172" mass="18116">MAKTSAKNIRPGELNLKEKLVHINRTAKVVKGGKRFGFNAIVVVGDKEGHVGYGLGKANEVQDAIAKGIEDGKKNVIKVPIVKGTIPHQIVAKFGSAKVMMKPATPGTGLIAGGAVRAVLEMAGIHDILTKSLGSSNPHNVVKAAIKGLQSISDAYDVGERRSKSLKEVFES</sequence>
<organism>
    <name type="scientific">Pelodictyon phaeoclathratiforme (strain DSM 5477 / BU-1)</name>
    <dbReference type="NCBI Taxonomy" id="324925"/>
    <lineage>
        <taxon>Bacteria</taxon>
        <taxon>Pseudomonadati</taxon>
        <taxon>Chlorobiota</taxon>
        <taxon>Chlorobiia</taxon>
        <taxon>Chlorobiales</taxon>
        <taxon>Chlorobiaceae</taxon>
        <taxon>Chlorobium/Pelodictyon group</taxon>
        <taxon>Pelodictyon</taxon>
    </lineage>
</organism>
<protein>
    <recommendedName>
        <fullName evidence="1">Small ribosomal subunit protein uS5</fullName>
    </recommendedName>
    <alternativeName>
        <fullName evidence="2">30S ribosomal protein S5</fullName>
    </alternativeName>
</protein>